<accession>A0A0U5HAQ4</accession>
<comment type="function">
    <text evidence="1 3 4">FAD-binding monooxygenase; part of the gene cluster that mediates the biosynthesis of calidodehydroaustin, a fungal meroterpenoid (PubMed:28233494, PubMed:29076725). The first step of the pathway is the synthesis of 3,5-dimethylorsellinic acid by the polyketide synthase ausA (PubMed:28233494). 3,5-dimethylorsellinic acid is then prenylated by the polyprenyl transferase ausN (PubMed:28233494). Further epoxidation by the FAD-dependent monooxygenase ausM and cyclization by the probable terpene cyclase ausL lead to the formation of protoaustinoid A (By similarity). Protoaustinoid A is then oxidized to spiro-lactone preaustinoid A3 by the combined action of the FAD-binding monooxygenases ausB and ausC, and the dioxygenase ausE (By similarity). Acid-catalyzed keto-rearrangement and ring contraction of the tetraketide portion of preaustinoid A3 by ausJ lead to the formation of preaustinoid A4 (By similarity). The aldo-keto reductase ausK, with the help of ausH, is involved in the next step by transforming preaustinoid A4 into isoaustinone which is in turn hydroxylated by the P450 monooxygenase ausI to form austinolide (By similarity). The cytochrome P450 monooxygenase ausG modifies austinolide to austinol (By similarity). Austinol is further acetylated to austin by the O-acetyltransferase ausP, which spontaneously changes to dehydroaustin (PubMed:28233494). The cytochrome P450 monooxygenase ausR then converts dehydroaustin is into 7-dehydrodehydroaustin (PubMed:28233494). The hydroxylation catalyzed by ausR permits the O-acetyltransferase ausQ to add an additional acetyl group to the molecule, leading to the formation of acetoxydehydroaustin (PubMed:28233494). The short chain dehydrogenase ausT catalyzes the reduction of the double bond present between carbon atoms 1 and 2 to convert 7-dehydrodehydroaustin into 1,2-dihydro-7-hydroxydehydroaustin (PubMed:28233494). AusQ catalyzes not only an acetylation reaction but also the addition of the PKS ausV diketide product to 1,2-dihydro-7-hydroxydehydroaustin, forming precalidodehydroaustin (PubMed:28233494). Finally, the iron/alpha-ketoglutarate-dependent dioxygenase converts precalidodehydroaustin into calidodehydroaustin (PubMed:28233494).</text>
</comment>
<comment type="catalytic activity">
    <reaction evidence="1">
        <text>preaustinoid A + AH2 + O2 = preaustinoid A1 + A + H2O</text>
        <dbReference type="Rhea" id="RHEA:65168"/>
        <dbReference type="ChEBI" id="CHEBI:13193"/>
        <dbReference type="ChEBI" id="CHEBI:15377"/>
        <dbReference type="ChEBI" id="CHEBI:15379"/>
        <dbReference type="ChEBI" id="CHEBI:17499"/>
        <dbReference type="ChEBI" id="CHEBI:69023"/>
        <dbReference type="ChEBI" id="CHEBI:69026"/>
    </reaction>
    <physiologicalReaction direction="left-to-right" evidence="1">
        <dbReference type="Rhea" id="RHEA:65169"/>
    </physiologicalReaction>
</comment>
<comment type="cofactor">
    <cofactor evidence="2">
        <name>FAD</name>
        <dbReference type="ChEBI" id="CHEBI:57692"/>
    </cofactor>
    <text evidence="2">Binds 1 FAD per subunit.</text>
</comment>
<comment type="pathway">
    <text evidence="7">Secondary metabolite biosynthesis; terpenoid biosynthesis.</text>
</comment>
<comment type="miscellaneous">
    <text evidence="8">In A.calidoustus, the austinoid gene cluster lies on a contiguous DNA region, while clusters from E.nidulans and P.brasilianum are split in their respective genomes. Genetic rearrangements provoked variability among the clusters and E.nidulans produces the least number of austionoid derivatives with the end products austinol and dehydroaustinol, while P.brasilianum can produce until acetoxydehydroaustin, and A.calidoustus produces the highest number of identified derivatives.</text>
</comment>
<comment type="similarity">
    <text evidence="6">Belongs to the FAD-binding monooxygenase family.</text>
</comment>
<name>AUSC_ASPCI</name>
<feature type="chain" id="PRO_0000453848" description="FAD-binding monooxygenase ausC">
    <location>
        <begin position="1"/>
        <end position="670"/>
    </location>
</feature>
<feature type="binding site" evidence="2">
    <location>
        <begin position="144"/>
        <end position="147"/>
    </location>
    <ligand>
        <name>FAD</name>
        <dbReference type="ChEBI" id="CHEBI:57692"/>
    </ligand>
</feature>
<feature type="binding site" evidence="2">
    <location>
        <begin position="154"/>
        <end position="156"/>
    </location>
    <ligand>
        <name>NADP(+)</name>
        <dbReference type="ChEBI" id="CHEBI:58349"/>
    </ligand>
</feature>
<feature type="binding site" evidence="2">
    <location>
        <begin position="156"/>
        <end position="157"/>
    </location>
    <ligand>
        <name>FAD</name>
        <dbReference type="ChEBI" id="CHEBI:57692"/>
    </ligand>
</feature>
<feature type="binding site" evidence="2">
    <location>
        <position position="162"/>
    </location>
    <ligand>
        <name>FAD</name>
        <dbReference type="ChEBI" id="CHEBI:57692"/>
    </ligand>
</feature>
<feature type="binding site" evidence="2">
    <location>
        <begin position="299"/>
        <end position="305"/>
    </location>
    <ligand>
        <name>NADP(+)</name>
        <dbReference type="ChEBI" id="CHEBI:58349"/>
    </ligand>
</feature>
<feature type="binding site" evidence="2">
    <location>
        <begin position="322"/>
        <end position="323"/>
    </location>
    <ligand>
        <name>NADP(+)</name>
        <dbReference type="ChEBI" id="CHEBI:58349"/>
    </ligand>
</feature>
<feature type="site" description="Transition state stabilizer" evidence="2">
    <location>
        <position position="441"/>
    </location>
</feature>
<organism>
    <name type="scientific">Aspergillus calidoustus</name>
    <dbReference type="NCBI Taxonomy" id="454130"/>
    <lineage>
        <taxon>Eukaryota</taxon>
        <taxon>Fungi</taxon>
        <taxon>Dikarya</taxon>
        <taxon>Ascomycota</taxon>
        <taxon>Pezizomycotina</taxon>
        <taxon>Eurotiomycetes</taxon>
        <taxon>Eurotiomycetidae</taxon>
        <taxon>Eurotiales</taxon>
        <taxon>Aspergillaceae</taxon>
        <taxon>Aspergillus</taxon>
        <taxon>Aspergillus subgen. Nidulantes</taxon>
    </lineage>
</organism>
<reference key="1">
    <citation type="journal article" date="2016" name="Genome Announc.">
        <title>Draft genome sequences of fungus Aspergillus calidoustus.</title>
        <authorList>
            <person name="Horn F."/>
            <person name="Linde J."/>
            <person name="Mattern D.J."/>
            <person name="Walther G."/>
            <person name="Guthke R."/>
            <person name="Scherlach K."/>
            <person name="Martin K."/>
            <person name="Brakhage A.A."/>
            <person name="Petzke L."/>
            <person name="Valiante V."/>
        </authorList>
    </citation>
    <scope>NUCLEOTIDE SEQUENCE [LARGE SCALE GENOMIC DNA]</scope>
    <source>
        <strain>SF006504</strain>
    </source>
</reference>
<reference key="2">
    <citation type="journal article" date="2017" name="ACS Chem. Biol.">
        <title>Discovery of an Extended Austinoid Biosynthetic Pathway in Aspergillus calidoustus.</title>
        <authorList>
            <person name="Valiante V."/>
            <person name="Mattern D.J."/>
            <person name="Schueffler A."/>
            <person name="Horn F."/>
            <person name="Walther G."/>
            <person name="Scherlach K."/>
            <person name="Petzke L."/>
            <person name="Dickhaut J."/>
            <person name="Guthke R."/>
            <person name="Hertweck C."/>
            <person name="Nett M."/>
            <person name="Thines E."/>
            <person name="Brakhage A.A."/>
        </authorList>
    </citation>
    <scope>FUNCTION</scope>
    <scope>PATHWAY</scope>
</reference>
<reference key="3">
    <citation type="journal article" date="2017" name="ACS Chem. Biol.">
        <title>Rewiring of the austinoid biosynthetic pathway in filamentous fungi.</title>
        <authorList>
            <person name="Mattern D.J."/>
            <person name="Valiante V."/>
            <person name="Horn F."/>
            <person name="Petzke L."/>
            <person name="Brakhage A.A."/>
        </authorList>
    </citation>
    <scope>FUNCTION</scope>
</reference>
<protein>
    <recommendedName>
        <fullName evidence="5">FAD-binding monooxygenase ausC</fullName>
        <ecNumber evidence="7">1.14.13.-</ecNumber>
    </recommendedName>
    <alternativeName>
        <fullName evidence="5">Austinoid biosynthesis cluster protein C</fullName>
    </alternativeName>
</protein>
<dbReference type="EC" id="1.14.13.-" evidence="7"/>
<dbReference type="EMBL" id="CDMC01000024">
    <property type="protein sequence ID" value="CEL11268.1"/>
    <property type="molecule type" value="Genomic_DNA"/>
</dbReference>
<dbReference type="SMR" id="A0A0U5HAQ4"/>
<dbReference type="STRING" id="454130.A0A0U5HAQ4"/>
<dbReference type="OMA" id="INTEYLM"/>
<dbReference type="OrthoDB" id="66881at2759"/>
<dbReference type="UniPathway" id="UPA00213"/>
<dbReference type="Proteomes" id="UP000054771">
    <property type="component" value="Unassembled WGS sequence"/>
</dbReference>
<dbReference type="GO" id="GO:0004497">
    <property type="term" value="F:monooxygenase activity"/>
    <property type="evidence" value="ECO:0007669"/>
    <property type="project" value="UniProtKB-KW"/>
</dbReference>
<dbReference type="GO" id="GO:0016114">
    <property type="term" value="P:terpenoid biosynthetic process"/>
    <property type="evidence" value="ECO:0007669"/>
    <property type="project" value="UniProtKB-UniPathway"/>
</dbReference>
<dbReference type="FunFam" id="3.50.50.60:FF:000518">
    <property type="entry name" value="Steroid monooxygenase, putative"/>
    <property type="match status" value="1"/>
</dbReference>
<dbReference type="Gene3D" id="3.50.50.60">
    <property type="entry name" value="FAD/NAD(P)-binding domain"/>
    <property type="match status" value="2"/>
</dbReference>
<dbReference type="InterPro" id="IPR050775">
    <property type="entry name" value="FAD-binding_Monooxygenases"/>
</dbReference>
<dbReference type="InterPro" id="IPR036188">
    <property type="entry name" value="FAD/NAD-bd_sf"/>
</dbReference>
<dbReference type="InterPro" id="IPR023753">
    <property type="entry name" value="FAD/NAD-binding_dom"/>
</dbReference>
<dbReference type="PANTHER" id="PTHR43098:SF2">
    <property type="entry name" value="FAD-BINDING MONOOXYGENASE AUSB-RELATED"/>
    <property type="match status" value="1"/>
</dbReference>
<dbReference type="PANTHER" id="PTHR43098">
    <property type="entry name" value="L-ORNITHINE N(5)-MONOOXYGENASE-RELATED"/>
    <property type="match status" value="1"/>
</dbReference>
<dbReference type="Pfam" id="PF07992">
    <property type="entry name" value="Pyr_redox_2"/>
    <property type="match status" value="1"/>
</dbReference>
<dbReference type="SUPFAM" id="SSF51905">
    <property type="entry name" value="FAD/NAD(P)-binding domain"/>
    <property type="match status" value="1"/>
</dbReference>
<gene>
    <name evidence="5" type="primary">ausC</name>
    <name type="ORF">ASPCAL14371</name>
</gene>
<sequence length="670" mass="74225">MEMRGIENKSDIALAEFRLTGINGPDKDSSGSTYPDAAAVEAKYEAERQIQLRAHETVSDIEITVDDGWTDLAQDPWAGCPDPAGETPHLLTQRSHLLSQHRHRVLIVGAGFGGLLFAVRLLQTGQFKASDIVIADTAAGFGGTWYWNRYPGLMCDTESYIYMPLLEETGYMPRDKYASGSEIRQHAERIARYWGLETRAMFRTSVRDLAWDEDKKIWNVAGRLLGDVMDTEQFRMAADIVLLASGSFASPRVPNYPDIAKYKGKLFHTARWDYQFTGGSLENPKLTGLADKRVGIIGTGASAVQIIPHLARYSRSLIVFQRTPAAVDARDNRPTDPVWWKEEMASQGAGWQQRRQKNFNAFTCNETPLPGNNCVGDGWTRMPSFSLLIGGPQNLAPDYIDQMRAVDLVRQAQIRERAHALVQDPVAADLLTPWYPGWCKRPCFHDDYLSALNEENVRLVDLRHGGLSHFTPSGVVANGEEYELDLIVLSTGYTVPVTRASPGSRGNISITGRNGMTMEAKWANGLATLHGVMTRDLPNLFFAGTSQAGACVNLTYSVDQNATHVAYILGKAFERRPPNCDKVVLQPTHEGEEQWAGEVLARAAAFRGIAGCTPGYLNGYGKSLDSLSPEQQVNMARLAAWGEGIASYVNRLEEWREKGELEGVEMTFLN</sequence>
<keyword id="KW-0274">FAD</keyword>
<keyword id="KW-0285">Flavoprotein</keyword>
<keyword id="KW-0503">Monooxygenase</keyword>
<keyword id="KW-0521">NADP</keyword>
<keyword id="KW-0560">Oxidoreductase</keyword>
<keyword id="KW-1185">Reference proteome</keyword>
<proteinExistence type="inferred from homology"/>
<evidence type="ECO:0000250" key="1">
    <source>
        <dbReference type="UniProtKB" id="C8VE79"/>
    </source>
</evidence>
<evidence type="ECO:0000250" key="2">
    <source>
        <dbReference type="UniProtKB" id="H3JQW0"/>
    </source>
</evidence>
<evidence type="ECO:0000269" key="3">
    <source>
    </source>
</evidence>
<evidence type="ECO:0000269" key="4">
    <source>
    </source>
</evidence>
<evidence type="ECO:0000303" key="5">
    <source>
    </source>
</evidence>
<evidence type="ECO:0000305" key="6"/>
<evidence type="ECO:0000305" key="7">
    <source>
    </source>
</evidence>
<evidence type="ECO:0000305" key="8">
    <source>
    </source>
</evidence>